<accession>Q0AUK8</accession>
<proteinExistence type="inferred from homology"/>
<dbReference type="EMBL" id="CP000448">
    <property type="protein sequence ID" value="ABI69596.1"/>
    <property type="molecule type" value="Genomic_DNA"/>
</dbReference>
<dbReference type="RefSeq" id="WP_011641680.1">
    <property type="nucleotide sequence ID" value="NC_008346.1"/>
</dbReference>
<dbReference type="SMR" id="Q0AUK8"/>
<dbReference type="STRING" id="335541.Swol_2305"/>
<dbReference type="KEGG" id="swo:Swol_2305"/>
<dbReference type="eggNOG" id="COG0522">
    <property type="taxonomic scope" value="Bacteria"/>
</dbReference>
<dbReference type="HOGENOM" id="CLU_092403_0_1_9"/>
<dbReference type="OrthoDB" id="9803672at2"/>
<dbReference type="Proteomes" id="UP000001968">
    <property type="component" value="Chromosome"/>
</dbReference>
<dbReference type="GO" id="GO:0015935">
    <property type="term" value="C:small ribosomal subunit"/>
    <property type="evidence" value="ECO:0007669"/>
    <property type="project" value="InterPro"/>
</dbReference>
<dbReference type="GO" id="GO:0019843">
    <property type="term" value="F:rRNA binding"/>
    <property type="evidence" value="ECO:0007669"/>
    <property type="project" value="UniProtKB-UniRule"/>
</dbReference>
<dbReference type="GO" id="GO:0003735">
    <property type="term" value="F:structural constituent of ribosome"/>
    <property type="evidence" value="ECO:0007669"/>
    <property type="project" value="InterPro"/>
</dbReference>
<dbReference type="GO" id="GO:0042274">
    <property type="term" value="P:ribosomal small subunit biogenesis"/>
    <property type="evidence" value="ECO:0007669"/>
    <property type="project" value="TreeGrafter"/>
</dbReference>
<dbReference type="GO" id="GO:0006412">
    <property type="term" value="P:translation"/>
    <property type="evidence" value="ECO:0007669"/>
    <property type="project" value="UniProtKB-UniRule"/>
</dbReference>
<dbReference type="CDD" id="cd00165">
    <property type="entry name" value="S4"/>
    <property type="match status" value="1"/>
</dbReference>
<dbReference type="FunFam" id="1.10.1050.10:FF:000001">
    <property type="entry name" value="30S ribosomal protein S4"/>
    <property type="match status" value="1"/>
</dbReference>
<dbReference type="FunFam" id="3.10.290.10:FF:000001">
    <property type="entry name" value="30S ribosomal protein S4"/>
    <property type="match status" value="1"/>
</dbReference>
<dbReference type="Gene3D" id="1.10.1050.10">
    <property type="entry name" value="Ribosomal Protein S4 Delta 41, Chain A, domain 1"/>
    <property type="match status" value="1"/>
</dbReference>
<dbReference type="Gene3D" id="3.10.290.10">
    <property type="entry name" value="RNA-binding S4 domain"/>
    <property type="match status" value="1"/>
</dbReference>
<dbReference type="HAMAP" id="MF_01306_B">
    <property type="entry name" value="Ribosomal_uS4_B"/>
    <property type="match status" value="1"/>
</dbReference>
<dbReference type="InterPro" id="IPR022801">
    <property type="entry name" value="Ribosomal_uS4"/>
</dbReference>
<dbReference type="InterPro" id="IPR005709">
    <property type="entry name" value="Ribosomal_uS4_bac-type"/>
</dbReference>
<dbReference type="InterPro" id="IPR018079">
    <property type="entry name" value="Ribosomal_uS4_CS"/>
</dbReference>
<dbReference type="InterPro" id="IPR001912">
    <property type="entry name" value="Ribosomal_uS4_N"/>
</dbReference>
<dbReference type="InterPro" id="IPR002942">
    <property type="entry name" value="S4_RNA-bd"/>
</dbReference>
<dbReference type="InterPro" id="IPR036986">
    <property type="entry name" value="S4_RNA-bd_sf"/>
</dbReference>
<dbReference type="NCBIfam" id="NF003717">
    <property type="entry name" value="PRK05327.1"/>
    <property type="match status" value="1"/>
</dbReference>
<dbReference type="NCBIfam" id="TIGR01017">
    <property type="entry name" value="rpsD_bact"/>
    <property type="match status" value="1"/>
</dbReference>
<dbReference type="PANTHER" id="PTHR11831">
    <property type="entry name" value="30S 40S RIBOSOMAL PROTEIN"/>
    <property type="match status" value="1"/>
</dbReference>
<dbReference type="PANTHER" id="PTHR11831:SF4">
    <property type="entry name" value="SMALL RIBOSOMAL SUBUNIT PROTEIN US4M"/>
    <property type="match status" value="1"/>
</dbReference>
<dbReference type="Pfam" id="PF00163">
    <property type="entry name" value="Ribosomal_S4"/>
    <property type="match status" value="1"/>
</dbReference>
<dbReference type="Pfam" id="PF01479">
    <property type="entry name" value="S4"/>
    <property type="match status" value="1"/>
</dbReference>
<dbReference type="SMART" id="SM01390">
    <property type="entry name" value="Ribosomal_S4"/>
    <property type="match status" value="1"/>
</dbReference>
<dbReference type="SMART" id="SM00363">
    <property type="entry name" value="S4"/>
    <property type="match status" value="1"/>
</dbReference>
<dbReference type="SUPFAM" id="SSF55174">
    <property type="entry name" value="Alpha-L RNA-binding motif"/>
    <property type="match status" value="1"/>
</dbReference>
<dbReference type="PROSITE" id="PS00632">
    <property type="entry name" value="RIBOSOMAL_S4"/>
    <property type="match status" value="1"/>
</dbReference>
<dbReference type="PROSITE" id="PS50889">
    <property type="entry name" value="S4"/>
    <property type="match status" value="1"/>
</dbReference>
<reference key="1">
    <citation type="journal article" date="2010" name="Environ. Microbiol.">
        <title>The genome of Syntrophomonas wolfei: new insights into syntrophic metabolism and biohydrogen production.</title>
        <authorList>
            <person name="Sieber J.R."/>
            <person name="Sims D.R."/>
            <person name="Han C."/>
            <person name="Kim E."/>
            <person name="Lykidis A."/>
            <person name="Lapidus A.L."/>
            <person name="McDonnald E."/>
            <person name="Rohlin L."/>
            <person name="Culley D.E."/>
            <person name="Gunsalus R."/>
            <person name="McInerney M.J."/>
        </authorList>
    </citation>
    <scope>NUCLEOTIDE SEQUENCE [LARGE SCALE GENOMIC DNA]</scope>
    <source>
        <strain>DSM 2245B / Goettingen</strain>
    </source>
</reference>
<gene>
    <name evidence="1" type="primary">rpsD</name>
    <name type="ordered locus">Swol_2305</name>
</gene>
<keyword id="KW-1185">Reference proteome</keyword>
<keyword id="KW-0687">Ribonucleoprotein</keyword>
<keyword id="KW-0689">Ribosomal protein</keyword>
<keyword id="KW-0694">RNA-binding</keyword>
<keyword id="KW-0699">rRNA-binding</keyword>
<name>RS4_SYNWW</name>
<evidence type="ECO:0000255" key="1">
    <source>
        <dbReference type="HAMAP-Rule" id="MF_01306"/>
    </source>
</evidence>
<evidence type="ECO:0000305" key="2"/>
<organism>
    <name type="scientific">Syntrophomonas wolfei subsp. wolfei (strain DSM 2245B / Goettingen)</name>
    <dbReference type="NCBI Taxonomy" id="335541"/>
    <lineage>
        <taxon>Bacteria</taxon>
        <taxon>Bacillati</taxon>
        <taxon>Bacillota</taxon>
        <taxon>Clostridia</taxon>
        <taxon>Eubacteriales</taxon>
        <taxon>Syntrophomonadaceae</taxon>
        <taxon>Syntrophomonas</taxon>
    </lineage>
</organism>
<protein>
    <recommendedName>
        <fullName evidence="1">Small ribosomal subunit protein uS4</fullName>
    </recommendedName>
    <alternativeName>
        <fullName evidence="2">30S ribosomal protein S4</fullName>
    </alternativeName>
</protein>
<sequence length="209" mass="24475">MGRYTDSVCRQCRREGEKLFLKGDRCYSEKCSVSRRAYPPGAHGQGRRQKPSEYGIQLREKQKTRRIYGIQEKQFRNYFRKADRKQGITGDNLLVLLERRLDNVVYRLGFASSRKEARQLVNHGHFFINGHKANIPSMLVRVGDIIEVRQSSRESNKFQEMKEQAAYKTPPEWLSVDAEKMTGTVLAYPRREQIDTLVNEQLIVELYSR</sequence>
<comment type="function">
    <text evidence="1">One of the primary rRNA binding proteins, it binds directly to 16S rRNA where it nucleates assembly of the body of the 30S subunit.</text>
</comment>
<comment type="function">
    <text evidence="1">With S5 and S12 plays an important role in translational accuracy.</text>
</comment>
<comment type="subunit">
    <text evidence="1">Part of the 30S ribosomal subunit. Contacts protein S5. The interaction surface between S4 and S5 is involved in control of translational fidelity.</text>
</comment>
<comment type="similarity">
    <text evidence="1">Belongs to the universal ribosomal protein uS4 family.</text>
</comment>
<feature type="chain" id="PRO_0000293391" description="Small ribosomal subunit protein uS4">
    <location>
        <begin position="1"/>
        <end position="209"/>
    </location>
</feature>
<feature type="domain" description="S4 RNA-binding" evidence="1">
    <location>
        <begin position="99"/>
        <end position="162"/>
    </location>
</feature>